<feature type="chain" id="PRO_0000126895" description="Phenylalanine--tRNA ligase beta subunit">
    <location>
        <begin position="1"/>
        <end position="795"/>
    </location>
</feature>
<feature type="domain" description="tRNA-binding" evidence="1">
    <location>
        <begin position="39"/>
        <end position="148"/>
    </location>
</feature>
<feature type="domain" description="B5" evidence="1">
    <location>
        <begin position="401"/>
        <end position="476"/>
    </location>
</feature>
<feature type="domain" description="FDX-ACB" evidence="1">
    <location>
        <begin position="701"/>
        <end position="794"/>
    </location>
</feature>
<feature type="binding site" evidence="1">
    <location>
        <position position="454"/>
    </location>
    <ligand>
        <name>Mg(2+)</name>
        <dbReference type="ChEBI" id="CHEBI:18420"/>
        <note>shared with alpha subunit</note>
    </ligand>
</feature>
<feature type="binding site" evidence="1">
    <location>
        <position position="460"/>
    </location>
    <ligand>
        <name>Mg(2+)</name>
        <dbReference type="ChEBI" id="CHEBI:18420"/>
        <note>shared with alpha subunit</note>
    </ligand>
</feature>
<feature type="binding site" evidence="1">
    <location>
        <position position="463"/>
    </location>
    <ligand>
        <name>Mg(2+)</name>
        <dbReference type="ChEBI" id="CHEBI:18420"/>
        <note>shared with alpha subunit</note>
    </ligand>
</feature>
<feature type="binding site" evidence="1">
    <location>
        <position position="464"/>
    </location>
    <ligand>
        <name>Mg(2+)</name>
        <dbReference type="ChEBI" id="CHEBI:18420"/>
        <note>shared with alpha subunit</note>
    </ligand>
</feature>
<sequence>MKFSEQWLREWVNPDISSHELSEQLSMAGLEVDAVEPVADEFHTVVVGEVIECGPHPDADKLQVTKVNVGEDEPVDIVCGASNCRLGIKVAVAKVGAVLPGDFKIKKAKLRGQPSNGMLCSFKELGLIDEHDGIIELPADAPVGEDYRKYLQLDDNSIDIDLTPNRGDCLSIRGIAREVGVLNRLDVTVPESNEVTASIEDTLSISLSAAEQCPRYLGRVIKGVDLTRPTPVWMTEKLRRSGIRSIDPVVDVTNYVLLELGHPMHAFDLDSLEGNIDVRLAKPKEQLTLLDEQLVELDEDTLVIADEKKALAMAGVYGGKNSGVTESSKNIFLESAFFAPDAILGKARRYGLHTDASHRYERGVDPQLQRTAMERATELLLAICGGEAGPVTEAVAEAFLPKRDGITLRACRLAKVLGVSIANDNVTEILERLGFDVSFDGEQWQVGIPSYRFDLSIEEDLIEEVARVYGYNSIQAAPPAAQLRMTERKESQLSTHQLVDAMVSRGYQEAITYSFVDPKHQALMFDETAALTLPHPISVDMSSMRVSLWPGLVGAVAHNQKRQQSVLAFVETGLRFIPDESAENGVRQEAVISGIRSGKAHSEHWSEGDRPVDFYDVKGDVEALLAQTGNAAAFRFVASQNPALHPGQSAAIYRGSEKVGDIGALHPKFDKALGLNQRTFVFELALSVVTERPLPQAKPVSRYPSIRRDLAVVVDKDLAAGELIAAMENVGVKQLVDLNLFDVYIGDGVAEGKQSLALSVTLQDSDKTLEEAEVTELMTKFIETLKSEFNATLRD</sequence>
<comment type="catalytic activity">
    <reaction evidence="1">
        <text>tRNA(Phe) + L-phenylalanine + ATP = L-phenylalanyl-tRNA(Phe) + AMP + diphosphate + H(+)</text>
        <dbReference type="Rhea" id="RHEA:19413"/>
        <dbReference type="Rhea" id="RHEA-COMP:9668"/>
        <dbReference type="Rhea" id="RHEA-COMP:9699"/>
        <dbReference type="ChEBI" id="CHEBI:15378"/>
        <dbReference type="ChEBI" id="CHEBI:30616"/>
        <dbReference type="ChEBI" id="CHEBI:33019"/>
        <dbReference type="ChEBI" id="CHEBI:58095"/>
        <dbReference type="ChEBI" id="CHEBI:78442"/>
        <dbReference type="ChEBI" id="CHEBI:78531"/>
        <dbReference type="ChEBI" id="CHEBI:456215"/>
        <dbReference type="EC" id="6.1.1.20"/>
    </reaction>
</comment>
<comment type="cofactor">
    <cofactor evidence="1">
        <name>Mg(2+)</name>
        <dbReference type="ChEBI" id="CHEBI:18420"/>
    </cofactor>
    <text evidence="1">Binds 2 magnesium ions per tetramer.</text>
</comment>
<comment type="subunit">
    <text evidence="1">Tetramer of two alpha and two beta subunits.</text>
</comment>
<comment type="subcellular location">
    <subcellularLocation>
        <location evidence="1">Cytoplasm</location>
    </subcellularLocation>
</comment>
<comment type="similarity">
    <text evidence="1">Belongs to the phenylalanyl-tRNA synthetase beta subunit family. Type 1 subfamily.</text>
</comment>
<protein>
    <recommendedName>
        <fullName evidence="1">Phenylalanine--tRNA ligase beta subunit</fullName>
        <ecNumber evidence="1">6.1.1.20</ecNumber>
    </recommendedName>
    <alternativeName>
        <fullName evidence="1">Phenylalanyl-tRNA synthetase beta subunit</fullName>
        <shortName evidence="1">PheRS</shortName>
    </alternativeName>
</protein>
<proteinExistence type="inferred from homology"/>
<evidence type="ECO:0000255" key="1">
    <source>
        <dbReference type="HAMAP-Rule" id="MF_00283"/>
    </source>
</evidence>
<name>SYFB_IDILO</name>
<accession>Q5QXL8</accession>
<keyword id="KW-0030">Aminoacyl-tRNA synthetase</keyword>
<keyword id="KW-0067">ATP-binding</keyword>
<keyword id="KW-0963">Cytoplasm</keyword>
<keyword id="KW-0436">Ligase</keyword>
<keyword id="KW-0460">Magnesium</keyword>
<keyword id="KW-0479">Metal-binding</keyword>
<keyword id="KW-0547">Nucleotide-binding</keyword>
<keyword id="KW-0648">Protein biosynthesis</keyword>
<keyword id="KW-1185">Reference proteome</keyword>
<keyword id="KW-0694">RNA-binding</keyword>
<keyword id="KW-0820">tRNA-binding</keyword>
<gene>
    <name evidence="1" type="primary">pheT</name>
    <name type="ordered locus">IL1394</name>
</gene>
<dbReference type="EC" id="6.1.1.20" evidence="1"/>
<dbReference type="EMBL" id="AE017340">
    <property type="protein sequence ID" value="AAV82234.1"/>
    <property type="molecule type" value="Genomic_DNA"/>
</dbReference>
<dbReference type="RefSeq" id="WP_011234640.1">
    <property type="nucleotide sequence ID" value="NC_006512.1"/>
</dbReference>
<dbReference type="SMR" id="Q5QXL8"/>
<dbReference type="STRING" id="283942.IL1394"/>
<dbReference type="GeneID" id="41336570"/>
<dbReference type="KEGG" id="ilo:IL1394"/>
<dbReference type="eggNOG" id="COG0072">
    <property type="taxonomic scope" value="Bacteria"/>
</dbReference>
<dbReference type="eggNOG" id="COG0073">
    <property type="taxonomic scope" value="Bacteria"/>
</dbReference>
<dbReference type="HOGENOM" id="CLU_016891_0_0_6"/>
<dbReference type="OrthoDB" id="9805455at2"/>
<dbReference type="Proteomes" id="UP000001171">
    <property type="component" value="Chromosome"/>
</dbReference>
<dbReference type="GO" id="GO:0009328">
    <property type="term" value="C:phenylalanine-tRNA ligase complex"/>
    <property type="evidence" value="ECO:0007669"/>
    <property type="project" value="TreeGrafter"/>
</dbReference>
<dbReference type="GO" id="GO:0005524">
    <property type="term" value="F:ATP binding"/>
    <property type="evidence" value="ECO:0007669"/>
    <property type="project" value="UniProtKB-UniRule"/>
</dbReference>
<dbReference type="GO" id="GO:0000287">
    <property type="term" value="F:magnesium ion binding"/>
    <property type="evidence" value="ECO:0007669"/>
    <property type="project" value="UniProtKB-UniRule"/>
</dbReference>
<dbReference type="GO" id="GO:0004826">
    <property type="term" value="F:phenylalanine-tRNA ligase activity"/>
    <property type="evidence" value="ECO:0007669"/>
    <property type="project" value="UniProtKB-UniRule"/>
</dbReference>
<dbReference type="GO" id="GO:0000049">
    <property type="term" value="F:tRNA binding"/>
    <property type="evidence" value="ECO:0007669"/>
    <property type="project" value="UniProtKB-KW"/>
</dbReference>
<dbReference type="GO" id="GO:0006432">
    <property type="term" value="P:phenylalanyl-tRNA aminoacylation"/>
    <property type="evidence" value="ECO:0007669"/>
    <property type="project" value="UniProtKB-UniRule"/>
</dbReference>
<dbReference type="CDD" id="cd00769">
    <property type="entry name" value="PheRS_beta_core"/>
    <property type="match status" value="1"/>
</dbReference>
<dbReference type="CDD" id="cd02796">
    <property type="entry name" value="tRNA_bind_bactPheRS"/>
    <property type="match status" value="1"/>
</dbReference>
<dbReference type="FunFam" id="2.40.50.140:FF:000045">
    <property type="entry name" value="Phenylalanine--tRNA ligase beta subunit"/>
    <property type="match status" value="1"/>
</dbReference>
<dbReference type="FunFam" id="3.30.56.10:FF:000002">
    <property type="entry name" value="Phenylalanine--tRNA ligase beta subunit"/>
    <property type="match status" value="1"/>
</dbReference>
<dbReference type="FunFam" id="3.30.70.380:FF:000001">
    <property type="entry name" value="Phenylalanine--tRNA ligase beta subunit"/>
    <property type="match status" value="1"/>
</dbReference>
<dbReference type="FunFam" id="3.30.930.10:FF:000022">
    <property type="entry name" value="Phenylalanine--tRNA ligase beta subunit"/>
    <property type="match status" value="1"/>
</dbReference>
<dbReference type="FunFam" id="3.50.40.10:FF:000001">
    <property type="entry name" value="Phenylalanine--tRNA ligase beta subunit"/>
    <property type="match status" value="1"/>
</dbReference>
<dbReference type="Gene3D" id="3.30.56.10">
    <property type="match status" value="2"/>
</dbReference>
<dbReference type="Gene3D" id="3.30.930.10">
    <property type="entry name" value="Bira Bifunctional Protein, Domain 2"/>
    <property type="match status" value="1"/>
</dbReference>
<dbReference type="Gene3D" id="3.30.70.380">
    <property type="entry name" value="Ferrodoxin-fold anticodon-binding domain"/>
    <property type="match status" value="1"/>
</dbReference>
<dbReference type="Gene3D" id="2.40.50.140">
    <property type="entry name" value="Nucleic acid-binding proteins"/>
    <property type="match status" value="1"/>
</dbReference>
<dbReference type="Gene3D" id="3.50.40.10">
    <property type="entry name" value="Phenylalanyl-trna Synthetase, Chain B, domain 3"/>
    <property type="match status" value="1"/>
</dbReference>
<dbReference type="HAMAP" id="MF_00283">
    <property type="entry name" value="Phe_tRNA_synth_beta1"/>
    <property type="match status" value="1"/>
</dbReference>
<dbReference type="InterPro" id="IPR045864">
    <property type="entry name" value="aa-tRNA-synth_II/BPL/LPL"/>
</dbReference>
<dbReference type="InterPro" id="IPR005146">
    <property type="entry name" value="B3/B4_tRNA-bd"/>
</dbReference>
<dbReference type="InterPro" id="IPR009061">
    <property type="entry name" value="DNA-bd_dom_put_sf"/>
</dbReference>
<dbReference type="InterPro" id="IPR005121">
    <property type="entry name" value="Fdx_antiC-bd"/>
</dbReference>
<dbReference type="InterPro" id="IPR036690">
    <property type="entry name" value="Fdx_antiC-bd_sf"/>
</dbReference>
<dbReference type="InterPro" id="IPR012340">
    <property type="entry name" value="NA-bd_OB-fold"/>
</dbReference>
<dbReference type="InterPro" id="IPR045060">
    <property type="entry name" value="Phe-tRNA-ligase_IIc_bsu"/>
</dbReference>
<dbReference type="InterPro" id="IPR004532">
    <property type="entry name" value="Phe-tRNA-ligase_IIc_bsu_bact"/>
</dbReference>
<dbReference type="InterPro" id="IPR020825">
    <property type="entry name" value="Phe-tRNA_synthase-like_B3/B4"/>
</dbReference>
<dbReference type="InterPro" id="IPR041616">
    <property type="entry name" value="PheRS_beta_core"/>
</dbReference>
<dbReference type="InterPro" id="IPR002547">
    <property type="entry name" value="tRNA-bd_dom"/>
</dbReference>
<dbReference type="InterPro" id="IPR033714">
    <property type="entry name" value="tRNA_bind_bactPheRS"/>
</dbReference>
<dbReference type="InterPro" id="IPR005147">
    <property type="entry name" value="tRNA_synthase_B5-dom"/>
</dbReference>
<dbReference type="NCBIfam" id="TIGR00472">
    <property type="entry name" value="pheT_bact"/>
    <property type="match status" value="1"/>
</dbReference>
<dbReference type="NCBIfam" id="NF045760">
    <property type="entry name" value="YtpR"/>
    <property type="match status" value="1"/>
</dbReference>
<dbReference type="PANTHER" id="PTHR10947:SF0">
    <property type="entry name" value="PHENYLALANINE--TRNA LIGASE BETA SUBUNIT"/>
    <property type="match status" value="1"/>
</dbReference>
<dbReference type="PANTHER" id="PTHR10947">
    <property type="entry name" value="PHENYLALANYL-TRNA SYNTHETASE BETA CHAIN AND LEUCINE-RICH REPEAT-CONTAINING PROTEIN 47"/>
    <property type="match status" value="1"/>
</dbReference>
<dbReference type="Pfam" id="PF03483">
    <property type="entry name" value="B3_4"/>
    <property type="match status" value="1"/>
</dbReference>
<dbReference type="Pfam" id="PF03484">
    <property type="entry name" value="B5"/>
    <property type="match status" value="1"/>
</dbReference>
<dbReference type="Pfam" id="PF03147">
    <property type="entry name" value="FDX-ACB"/>
    <property type="match status" value="1"/>
</dbReference>
<dbReference type="Pfam" id="PF01588">
    <property type="entry name" value="tRNA_bind"/>
    <property type="match status" value="1"/>
</dbReference>
<dbReference type="Pfam" id="PF17759">
    <property type="entry name" value="tRNA_synthFbeta"/>
    <property type="match status" value="1"/>
</dbReference>
<dbReference type="SMART" id="SM00873">
    <property type="entry name" value="B3_4"/>
    <property type="match status" value="1"/>
</dbReference>
<dbReference type="SMART" id="SM00874">
    <property type="entry name" value="B5"/>
    <property type="match status" value="1"/>
</dbReference>
<dbReference type="SMART" id="SM00896">
    <property type="entry name" value="FDX-ACB"/>
    <property type="match status" value="1"/>
</dbReference>
<dbReference type="SUPFAM" id="SSF54991">
    <property type="entry name" value="Anticodon-binding domain of PheRS"/>
    <property type="match status" value="1"/>
</dbReference>
<dbReference type="SUPFAM" id="SSF55681">
    <property type="entry name" value="Class II aaRS and biotin synthetases"/>
    <property type="match status" value="1"/>
</dbReference>
<dbReference type="SUPFAM" id="SSF50249">
    <property type="entry name" value="Nucleic acid-binding proteins"/>
    <property type="match status" value="1"/>
</dbReference>
<dbReference type="SUPFAM" id="SSF56037">
    <property type="entry name" value="PheT/TilS domain"/>
    <property type="match status" value="1"/>
</dbReference>
<dbReference type="SUPFAM" id="SSF46955">
    <property type="entry name" value="Putative DNA-binding domain"/>
    <property type="match status" value="1"/>
</dbReference>
<dbReference type="PROSITE" id="PS51483">
    <property type="entry name" value="B5"/>
    <property type="match status" value="1"/>
</dbReference>
<dbReference type="PROSITE" id="PS51447">
    <property type="entry name" value="FDX_ACB"/>
    <property type="match status" value="1"/>
</dbReference>
<dbReference type="PROSITE" id="PS50886">
    <property type="entry name" value="TRBD"/>
    <property type="match status" value="1"/>
</dbReference>
<reference key="1">
    <citation type="journal article" date="2004" name="Proc. Natl. Acad. Sci. U.S.A.">
        <title>Genome sequence of the deep-sea gamma-proteobacterium Idiomarina loihiensis reveals amino acid fermentation as a source of carbon and energy.</title>
        <authorList>
            <person name="Hou S."/>
            <person name="Saw J.H."/>
            <person name="Lee K.S."/>
            <person name="Freitas T.A."/>
            <person name="Belisle C."/>
            <person name="Kawarabayasi Y."/>
            <person name="Donachie S.P."/>
            <person name="Pikina A."/>
            <person name="Galperin M.Y."/>
            <person name="Koonin E.V."/>
            <person name="Makarova K.S."/>
            <person name="Omelchenko M.V."/>
            <person name="Sorokin A."/>
            <person name="Wolf Y.I."/>
            <person name="Li Q.X."/>
            <person name="Keum Y.S."/>
            <person name="Campbell S."/>
            <person name="Denery J."/>
            <person name="Aizawa S."/>
            <person name="Shibata S."/>
            <person name="Malahoff A."/>
            <person name="Alam M."/>
        </authorList>
    </citation>
    <scope>NUCLEOTIDE SEQUENCE [LARGE SCALE GENOMIC DNA]</scope>
    <source>
        <strain>ATCC BAA-735 / DSM 15497 / L2-TR</strain>
    </source>
</reference>
<organism>
    <name type="scientific">Idiomarina loihiensis (strain ATCC BAA-735 / DSM 15497 / L2-TR)</name>
    <dbReference type="NCBI Taxonomy" id="283942"/>
    <lineage>
        <taxon>Bacteria</taxon>
        <taxon>Pseudomonadati</taxon>
        <taxon>Pseudomonadota</taxon>
        <taxon>Gammaproteobacteria</taxon>
        <taxon>Alteromonadales</taxon>
        <taxon>Idiomarinaceae</taxon>
        <taxon>Idiomarina</taxon>
    </lineage>
</organism>